<feature type="chain" id="PRO_1000195576" description="Large ribosomal subunit protein uL11">
    <location>
        <begin position="1"/>
        <end position="143"/>
    </location>
</feature>
<comment type="function">
    <text evidence="1">Forms part of the ribosomal stalk which helps the ribosome interact with GTP-bound translation factors.</text>
</comment>
<comment type="subunit">
    <text evidence="1">Part of the ribosomal stalk of the 50S ribosomal subunit. Interacts with L10 and the large rRNA to form the base of the stalk. L10 forms an elongated spine to which L12 dimers bind in a sequential fashion forming a multimeric L10(L12)X complex.</text>
</comment>
<comment type="PTM">
    <text evidence="1">One or more lysine residues are methylated.</text>
</comment>
<comment type="similarity">
    <text evidence="1">Belongs to the universal ribosomal protein uL11 family.</text>
</comment>
<gene>
    <name evidence="1" type="primary">rplK</name>
    <name type="ordered locus">Arad_1957</name>
</gene>
<organism>
    <name type="scientific">Rhizobium rhizogenes (strain K84 / ATCC BAA-868)</name>
    <name type="common">Agrobacterium radiobacter</name>
    <dbReference type="NCBI Taxonomy" id="311403"/>
    <lineage>
        <taxon>Bacteria</taxon>
        <taxon>Pseudomonadati</taxon>
        <taxon>Pseudomonadota</taxon>
        <taxon>Alphaproteobacteria</taxon>
        <taxon>Hyphomicrobiales</taxon>
        <taxon>Rhizobiaceae</taxon>
        <taxon>Rhizobium/Agrobacterium group</taxon>
        <taxon>Rhizobium</taxon>
    </lineage>
</organism>
<name>RL11_RHIR8</name>
<keyword id="KW-0488">Methylation</keyword>
<keyword id="KW-0687">Ribonucleoprotein</keyword>
<keyword id="KW-0689">Ribosomal protein</keyword>
<keyword id="KW-0694">RNA-binding</keyword>
<keyword id="KW-0699">rRNA-binding</keyword>
<dbReference type="EMBL" id="CP000628">
    <property type="protein sequence ID" value="ACM26268.1"/>
    <property type="molecule type" value="Genomic_DNA"/>
</dbReference>
<dbReference type="RefSeq" id="WP_007702183.1">
    <property type="nucleotide sequence ID" value="NC_011985.1"/>
</dbReference>
<dbReference type="SMR" id="B9JDR7"/>
<dbReference type="STRING" id="311403.Arad_1957"/>
<dbReference type="GeneID" id="86848155"/>
<dbReference type="KEGG" id="ara:Arad_1957"/>
<dbReference type="eggNOG" id="COG0080">
    <property type="taxonomic scope" value="Bacteria"/>
</dbReference>
<dbReference type="HOGENOM" id="CLU_074237_2_0_5"/>
<dbReference type="Proteomes" id="UP000001600">
    <property type="component" value="Chromosome 1"/>
</dbReference>
<dbReference type="GO" id="GO:0022625">
    <property type="term" value="C:cytosolic large ribosomal subunit"/>
    <property type="evidence" value="ECO:0007669"/>
    <property type="project" value="TreeGrafter"/>
</dbReference>
<dbReference type="GO" id="GO:0070180">
    <property type="term" value="F:large ribosomal subunit rRNA binding"/>
    <property type="evidence" value="ECO:0007669"/>
    <property type="project" value="UniProtKB-UniRule"/>
</dbReference>
<dbReference type="GO" id="GO:0003735">
    <property type="term" value="F:structural constituent of ribosome"/>
    <property type="evidence" value="ECO:0007669"/>
    <property type="project" value="InterPro"/>
</dbReference>
<dbReference type="GO" id="GO:0006412">
    <property type="term" value="P:translation"/>
    <property type="evidence" value="ECO:0007669"/>
    <property type="project" value="UniProtKB-UniRule"/>
</dbReference>
<dbReference type="CDD" id="cd00349">
    <property type="entry name" value="Ribosomal_L11"/>
    <property type="match status" value="1"/>
</dbReference>
<dbReference type="FunFam" id="3.30.1550.10:FF:000001">
    <property type="entry name" value="50S ribosomal protein L11"/>
    <property type="match status" value="1"/>
</dbReference>
<dbReference type="Gene3D" id="1.10.10.250">
    <property type="entry name" value="Ribosomal protein L11, C-terminal domain"/>
    <property type="match status" value="1"/>
</dbReference>
<dbReference type="Gene3D" id="3.30.1550.10">
    <property type="entry name" value="Ribosomal protein L11/L12, N-terminal domain"/>
    <property type="match status" value="1"/>
</dbReference>
<dbReference type="HAMAP" id="MF_00736">
    <property type="entry name" value="Ribosomal_uL11"/>
    <property type="match status" value="1"/>
</dbReference>
<dbReference type="InterPro" id="IPR000911">
    <property type="entry name" value="Ribosomal_uL11"/>
</dbReference>
<dbReference type="InterPro" id="IPR006519">
    <property type="entry name" value="Ribosomal_uL11_bac-typ"/>
</dbReference>
<dbReference type="InterPro" id="IPR020783">
    <property type="entry name" value="Ribosomal_uL11_C"/>
</dbReference>
<dbReference type="InterPro" id="IPR036769">
    <property type="entry name" value="Ribosomal_uL11_C_sf"/>
</dbReference>
<dbReference type="InterPro" id="IPR020784">
    <property type="entry name" value="Ribosomal_uL11_N"/>
</dbReference>
<dbReference type="InterPro" id="IPR036796">
    <property type="entry name" value="Ribosomal_uL11_N_sf"/>
</dbReference>
<dbReference type="NCBIfam" id="TIGR01632">
    <property type="entry name" value="L11_bact"/>
    <property type="match status" value="1"/>
</dbReference>
<dbReference type="PANTHER" id="PTHR11661">
    <property type="entry name" value="60S RIBOSOMAL PROTEIN L12"/>
    <property type="match status" value="1"/>
</dbReference>
<dbReference type="PANTHER" id="PTHR11661:SF1">
    <property type="entry name" value="LARGE RIBOSOMAL SUBUNIT PROTEIN UL11M"/>
    <property type="match status" value="1"/>
</dbReference>
<dbReference type="Pfam" id="PF00298">
    <property type="entry name" value="Ribosomal_L11"/>
    <property type="match status" value="1"/>
</dbReference>
<dbReference type="Pfam" id="PF03946">
    <property type="entry name" value="Ribosomal_L11_N"/>
    <property type="match status" value="1"/>
</dbReference>
<dbReference type="SMART" id="SM00649">
    <property type="entry name" value="RL11"/>
    <property type="match status" value="1"/>
</dbReference>
<dbReference type="SUPFAM" id="SSF54747">
    <property type="entry name" value="Ribosomal L11/L12e N-terminal domain"/>
    <property type="match status" value="1"/>
</dbReference>
<dbReference type="SUPFAM" id="SSF46906">
    <property type="entry name" value="Ribosomal protein L11, C-terminal domain"/>
    <property type="match status" value="1"/>
</dbReference>
<accession>B9JDR7</accession>
<reference key="1">
    <citation type="journal article" date="2009" name="J. Bacteriol.">
        <title>Genome sequences of three Agrobacterium biovars help elucidate the evolution of multichromosome genomes in bacteria.</title>
        <authorList>
            <person name="Slater S.C."/>
            <person name="Goldman B.S."/>
            <person name="Goodner B."/>
            <person name="Setubal J.C."/>
            <person name="Farrand S.K."/>
            <person name="Nester E.W."/>
            <person name="Burr T.J."/>
            <person name="Banta L."/>
            <person name="Dickerman A.W."/>
            <person name="Paulsen I."/>
            <person name="Otten L."/>
            <person name="Suen G."/>
            <person name="Welch R."/>
            <person name="Almeida N.F."/>
            <person name="Arnold F."/>
            <person name="Burton O.T."/>
            <person name="Du Z."/>
            <person name="Ewing A."/>
            <person name="Godsy E."/>
            <person name="Heisel S."/>
            <person name="Houmiel K.L."/>
            <person name="Jhaveri J."/>
            <person name="Lu J."/>
            <person name="Miller N.M."/>
            <person name="Norton S."/>
            <person name="Chen Q."/>
            <person name="Phoolcharoen W."/>
            <person name="Ohlin V."/>
            <person name="Ondrusek D."/>
            <person name="Pride N."/>
            <person name="Stricklin S.L."/>
            <person name="Sun J."/>
            <person name="Wheeler C."/>
            <person name="Wilson L."/>
            <person name="Zhu H."/>
            <person name="Wood D.W."/>
        </authorList>
    </citation>
    <scope>NUCLEOTIDE SEQUENCE [LARGE SCALE GENOMIC DNA]</scope>
    <source>
        <strain>K84 / ATCC BAA-868</strain>
    </source>
</reference>
<protein>
    <recommendedName>
        <fullName evidence="1">Large ribosomal subunit protein uL11</fullName>
    </recommendedName>
    <alternativeName>
        <fullName evidence="2">50S ribosomal protein L11</fullName>
    </alternativeName>
</protein>
<sequence length="143" mass="15134">MAKKVAGQLKLQVKAGSANPSPPIGPALGQRGINIMEFCKAFNAATQEMEKGMPIPVVITYYQDKSFTFVMKQPPVSYFLKKEAKIQSGSKTPGKGAKAGTLTRAQVQSIAQAKMKDLNAADIEGAMAMIEGSARAMGLEVVG</sequence>
<evidence type="ECO:0000255" key="1">
    <source>
        <dbReference type="HAMAP-Rule" id="MF_00736"/>
    </source>
</evidence>
<evidence type="ECO:0000305" key="2"/>
<proteinExistence type="inferred from homology"/>